<name>PSMD6_DICDI</name>
<sequence>MDESIKKLPDLAIADLIFTVKLEGKTGTESYNKLIKEIETHKMLPLYKILVEQLKWTEDQGLVSKLKAENESELKALDNKITDSVENFGESEIREAYLAKSDFYCRIGDKDTAVEMYRQTFEKTVPLGQKLDIVFTLIRMGIFWMDHDIVTRNLEKAQSLVEEGGDWDRKNRLKTYEAVYKMSIRQFKEASDLYLETVASFTSTEFIDYSRFIQYLIFTSLLHLDRVSLKQKVIDSPDVLSVINDTPKLQDLLQSFYNGDYANFFGALAHFSDSIKGDRYLAEHSRFFTREMRILAYNQFLESYSSVKLESMSNQFGVSYDFIDRELSRFVAAGRLNCKIDKVSGVIETTRSDAKNHLYKTTLQQGDNLLNRVQKLSRVINV</sequence>
<reference key="1">
    <citation type="journal article" date="2005" name="Nature">
        <title>The genome of the social amoeba Dictyostelium discoideum.</title>
        <authorList>
            <person name="Eichinger L."/>
            <person name="Pachebat J.A."/>
            <person name="Gloeckner G."/>
            <person name="Rajandream M.A."/>
            <person name="Sucgang R."/>
            <person name="Berriman M."/>
            <person name="Song J."/>
            <person name="Olsen R."/>
            <person name="Szafranski K."/>
            <person name="Xu Q."/>
            <person name="Tunggal B."/>
            <person name="Kummerfeld S."/>
            <person name="Madera M."/>
            <person name="Konfortov B.A."/>
            <person name="Rivero F."/>
            <person name="Bankier A.T."/>
            <person name="Lehmann R."/>
            <person name="Hamlin N."/>
            <person name="Davies R."/>
            <person name="Gaudet P."/>
            <person name="Fey P."/>
            <person name="Pilcher K."/>
            <person name="Chen G."/>
            <person name="Saunders D."/>
            <person name="Sodergren E.J."/>
            <person name="Davis P."/>
            <person name="Kerhornou A."/>
            <person name="Nie X."/>
            <person name="Hall N."/>
            <person name="Anjard C."/>
            <person name="Hemphill L."/>
            <person name="Bason N."/>
            <person name="Farbrother P."/>
            <person name="Desany B."/>
            <person name="Just E."/>
            <person name="Morio T."/>
            <person name="Rost R."/>
            <person name="Churcher C.M."/>
            <person name="Cooper J."/>
            <person name="Haydock S."/>
            <person name="van Driessche N."/>
            <person name="Cronin A."/>
            <person name="Goodhead I."/>
            <person name="Muzny D.M."/>
            <person name="Mourier T."/>
            <person name="Pain A."/>
            <person name="Lu M."/>
            <person name="Harper D."/>
            <person name="Lindsay R."/>
            <person name="Hauser H."/>
            <person name="James K.D."/>
            <person name="Quiles M."/>
            <person name="Madan Babu M."/>
            <person name="Saito T."/>
            <person name="Buchrieser C."/>
            <person name="Wardroper A."/>
            <person name="Felder M."/>
            <person name="Thangavelu M."/>
            <person name="Johnson D."/>
            <person name="Knights A."/>
            <person name="Loulseged H."/>
            <person name="Mungall K.L."/>
            <person name="Oliver K."/>
            <person name="Price C."/>
            <person name="Quail M.A."/>
            <person name="Urushihara H."/>
            <person name="Hernandez J."/>
            <person name="Rabbinowitsch E."/>
            <person name="Steffen D."/>
            <person name="Sanders M."/>
            <person name="Ma J."/>
            <person name="Kohara Y."/>
            <person name="Sharp S."/>
            <person name="Simmonds M.N."/>
            <person name="Spiegler S."/>
            <person name="Tivey A."/>
            <person name="Sugano S."/>
            <person name="White B."/>
            <person name="Walker D."/>
            <person name="Woodward J.R."/>
            <person name="Winckler T."/>
            <person name="Tanaka Y."/>
            <person name="Shaulsky G."/>
            <person name="Schleicher M."/>
            <person name="Weinstock G.M."/>
            <person name="Rosenthal A."/>
            <person name="Cox E.C."/>
            <person name="Chisholm R.L."/>
            <person name="Gibbs R.A."/>
            <person name="Loomis W.F."/>
            <person name="Platzer M."/>
            <person name="Kay R.R."/>
            <person name="Williams J.G."/>
            <person name="Dear P.H."/>
            <person name="Noegel A.A."/>
            <person name="Barrell B.G."/>
            <person name="Kuspa A."/>
        </authorList>
    </citation>
    <scope>NUCLEOTIDE SEQUENCE [LARGE SCALE GENOMIC DNA]</scope>
    <source>
        <strain>AX4</strain>
    </source>
</reference>
<reference key="2">
    <citation type="submission" date="2009-07" db="UniProtKB">
        <authorList>
            <person name="Bienvenut W.V."/>
            <person name="Ura S."/>
            <person name="Insall R.H."/>
        </authorList>
    </citation>
    <scope>PROTEIN SEQUENCE OF 107-118 AND 361-372</scope>
    <scope>IDENTIFICATION BY MASS SPECTROMETRY</scope>
    <source>
        <strain>AX2</strain>
    </source>
</reference>
<feature type="chain" id="PRO_0000327457" description="26S proteasome non-ATPase regulatory subunit 6">
    <location>
        <begin position="1"/>
        <end position="382"/>
    </location>
</feature>
<feature type="domain" description="PCI" evidence="2">
    <location>
        <begin position="186"/>
        <end position="354"/>
    </location>
</feature>
<evidence type="ECO:0000250" key="1"/>
<evidence type="ECO:0000255" key="2">
    <source>
        <dbReference type="PROSITE-ProRule" id="PRU01185"/>
    </source>
</evidence>
<evidence type="ECO:0000305" key="3"/>
<organism>
    <name type="scientific">Dictyostelium discoideum</name>
    <name type="common">Social amoeba</name>
    <dbReference type="NCBI Taxonomy" id="44689"/>
    <lineage>
        <taxon>Eukaryota</taxon>
        <taxon>Amoebozoa</taxon>
        <taxon>Evosea</taxon>
        <taxon>Eumycetozoa</taxon>
        <taxon>Dictyostelia</taxon>
        <taxon>Dictyosteliales</taxon>
        <taxon>Dictyosteliaceae</taxon>
        <taxon>Dictyostelium</taxon>
    </lineage>
</organism>
<protein>
    <recommendedName>
        <fullName>26S proteasome non-ATPase regulatory subunit 6</fullName>
    </recommendedName>
    <alternativeName>
        <fullName>26S proteasome regulatory subunit RPN7</fullName>
    </alternativeName>
    <alternativeName>
        <fullName>26S proteasome regulatory subunit S10</fullName>
    </alternativeName>
</protein>
<accession>Q55C75</accession>
<proteinExistence type="evidence at protein level"/>
<dbReference type="EMBL" id="AAFI02000005">
    <property type="protein sequence ID" value="EAL72444.1"/>
    <property type="molecule type" value="Genomic_DNA"/>
</dbReference>
<dbReference type="RefSeq" id="XP_646606.1">
    <property type="nucleotide sequence ID" value="XM_641514.2"/>
</dbReference>
<dbReference type="SMR" id="Q55C75"/>
<dbReference type="FunCoup" id="Q55C75">
    <property type="interactions" value="814"/>
</dbReference>
<dbReference type="STRING" id="44689.Q55C75"/>
<dbReference type="PaxDb" id="44689-DDB0232985"/>
<dbReference type="EnsemblProtists" id="EAL72444">
    <property type="protein sequence ID" value="EAL72444"/>
    <property type="gene ID" value="DDB_G0270188"/>
</dbReference>
<dbReference type="GeneID" id="8617578"/>
<dbReference type="KEGG" id="ddi:DDB_G0270188"/>
<dbReference type="dictyBase" id="DDB_G0270188">
    <property type="gene designation" value="psmD6"/>
</dbReference>
<dbReference type="VEuPathDB" id="AmoebaDB:DDB_G0270188"/>
<dbReference type="eggNOG" id="KOG0687">
    <property type="taxonomic scope" value="Eukaryota"/>
</dbReference>
<dbReference type="HOGENOM" id="CLU_031814_0_0_1"/>
<dbReference type="InParanoid" id="Q55C75"/>
<dbReference type="OMA" id="RLHCKVD"/>
<dbReference type="PhylomeDB" id="Q55C75"/>
<dbReference type="Reactome" id="R-DDI-1236978">
    <property type="pathway name" value="Cross-presentation of soluble exogenous antigens (endosomes)"/>
</dbReference>
<dbReference type="Reactome" id="R-DDI-174084">
    <property type="pathway name" value="Autodegradation of Cdh1 by Cdh1:APC/C"/>
</dbReference>
<dbReference type="Reactome" id="R-DDI-174154">
    <property type="pathway name" value="APC/C:Cdc20 mediated degradation of Securin"/>
</dbReference>
<dbReference type="Reactome" id="R-DDI-174178">
    <property type="pathway name" value="APC/C:Cdh1 mediated degradation of Cdc20 and other APC/C:Cdh1 targeted proteins in late mitosis/early G1"/>
</dbReference>
<dbReference type="Reactome" id="R-DDI-2467813">
    <property type="pathway name" value="Separation of Sister Chromatids"/>
</dbReference>
<dbReference type="Reactome" id="R-DDI-349425">
    <property type="pathway name" value="Autodegradation of the E3 ubiquitin ligase COP1"/>
</dbReference>
<dbReference type="Reactome" id="R-DDI-382556">
    <property type="pathway name" value="ABC-family proteins mediated transport"/>
</dbReference>
<dbReference type="Reactome" id="R-DDI-450408">
    <property type="pathway name" value="AUF1 (hnRNP D0) binds and destabilizes mRNA"/>
</dbReference>
<dbReference type="Reactome" id="R-DDI-4641258">
    <property type="pathway name" value="Degradation of DVL"/>
</dbReference>
<dbReference type="Reactome" id="R-DDI-5632684">
    <property type="pathway name" value="Hedgehog 'on' state"/>
</dbReference>
<dbReference type="Reactome" id="R-DDI-5658442">
    <property type="pathway name" value="Regulation of RAS by GAPs"/>
</dbReference>
<dbReference type="Reactome" id="R-DDI-5687128">
    <property type="pathway name" value="MAPK6/MAPK4 signaling"/>
</dbReference>
<dbReference type="Reactome" id="R-DDI-5689603">
    <property type="pathway name" value="UCH proteinases"/>
</dbReference>
<dbReference type="Reactome" id="R-DDI-5689880">
    <property type="pathway name" value="Ub-specific processing proteases"/>
</dbReference>
<dbReference type="Reactome" id="R-DDI-6798695">
    <property type="pathway name" value="Neutrophil degranulation"/>
</dbReference>
<dbReference type="Reactome" id="R-DDI-68949">
    <property type="pathway name" value="Orc1 removal from chromatin"/>
</dbReference>
<dbReference type="Reactome" id="R-DDI-69017">
    <property type="pathway name" value="CDK-mediated phosphorylation and removal of Cdc6"/>
</dbReference>
<dbReference type="Reactome" id="R-DDI-69601">
    <property type="pathway name" value="Ubiquitin Mediated Degradation of Phosphorylated Cdc25A"/>
</dbReference>
<dbReference type="Reactome" id="R-DDI-8854050">
    <property type="pathway name" value="FBXL7 down-regulates AURKA during mitotic entry and in early mitosis"/>
</dbReference>
<dbReference type="Reactome" id="R-DDI-8948751">
    <property type="pathway name" value="Regulation of PTEN stability and activity"/>
</dbReference>
<dbReference type="Reactome" id="R-DDI-8951664">
    <property type="pathway name" value="Neddylation"/>
</dbReference>
<dbReference type="Reactome" id="R-DDI-9755511">
    <property type="pathway name" value="KEAP1-NFE2L2 pathway"/>
</dbReference>
<dbReference type="Reactome" id="R-DDI-983168">
    <property type="pathway name" value="Antigen processing: Ubiquitination &amp; Proteasome degradation"/>
</dbReference>
<dbReference type="Reactome" id="R-DDI-9907900">
    <property type="pathway name" value="Proteasome assembly"/>
</dbReference>
<dbReference type="PRO" id="PR:Q55C75"/>
<dbReference type="Proteomes" id="UP000002195">
    <property type="component" value="Chromosome 1"/>
</dbReference>
<dbReference type="GO" id="GO:0000502">
    <property type="term" value="C:proteasome complex"/>
    <property type="evidence" value="ECO:0007669"/>
    <property type="project" value="UniProtKB-KW"/>
</dbReference>
<dbReference type="GO" id="GO:0005198">
    <property type="term" value="F:structural molecule activity"/>
    <property type="evidence" value="ECO:0000250"/>
    <property type="project" value="dictyBase"/>
</dbReference>
<dbReference type="GO" id="GO:0043161">
    <property type="term" value="P:proteasome-mediated ubiquitin-dependent protein catabolic process"/>
    <property type="evidence" value="ECO:0000318"/>
    <property type="project" value="GO_Central"/>
</dbReference>
<dbReference type="FunFam" id="1.25.40.570:FF:000005">
    <property type="entry name" value="26S proteasome regulatory subunit N7"/>
    <property type="match status" value="1"/>
</dbReference>
<dbReference type="Gene3D" id="1.25.40.570">
    <property type="match status" value="1"/>
</dbReference>
<dbReference type="InterPro" id="IPR000717">
    <property type="entry name" value="PCI_dom"/>
</dbReference>
<dbReference type="InterPro" id="IPR019585">
    <property type="entry name" value="Rpn7/CSN1"/>
</dbReference>
<dbReference type="InterPro" id="IPR045135">
    <property type="entry name" value="Rpn7_N"/>
</dbReference>
<dbReference type="InterPro" id="IPR049549">
    <property type="entry name" value="RPN7_PSMD6_C"/>
</dbReference>
<dbReference type="InterPro" id="IPR011990">
    <property type="entry name" value="TPR-like_helical_dom_sf"/>
</dbReference>
<dbReference type="InterPro" id="IPR036390">
    <property type="entry name" value="WH_DNA-bd_sf"/>
</dbReference>
<dbReference type="PANTHER" id="PTHR14145:SF1">
    <property type="entry name" value="26S PROTEASOME NON-ATPASE REGULATORY SUBUNIT 6"/>
    <property type="match status" value="1"/>
</dbReference>
<dbReference type="PANTHER" id="PTHR14145">
    <property type="entry name" value="26S PROTESOME SUBUNIT 6"/>
    <property type="match status" value="1"/>
</dbReference>
<dbReference type="Pfam" id="PF01399">
    <property type="entry name" value="PCI"/>
    <property type="match status" value="1"/>
</dbReference>
<dbReference type="Pfam" id="PF10602">
    <property type="entry name" value="RPN7"/>
    <property type="match status" value="1"/>
</dbReference>
<dbReference type="Pfam" id="PF21154">
    <property type="entry name" value="RPN7_PSMD6_C"/>
    <property type="match status" value="1"/>
</dbReference>
<dbReference type="SMART" id="SM00088">
    <property type="entry name" value="PINT"/>
    <property type="match status" value="1"/>
</dbReference>
<dbReference type="SUPFAM" id="SSF48452">
    <property type="entry name" value="TPR-like"/>
    <property type="match status" value="1"/>
</dbReference>
<dbReference type="SUPFAM" id="SSF46785">
    <property type="entry name" value="Winged helix' DNA-binding domain"/>
    <property type="match status" value="1"/>
</dbReference>
<dbReference type="PROSITE" id="PS50250">
    <property type="entry name" value="PCI"/>
    <property type="match status" value="1"/>
</dbReference>
<keyword id="KW-0903">Direct protein sequencing</keyword>
<keyword id="KW-0647">Proteasome</keyword>
<keyword id="KW-1185">Reference proteome</keyword>
<gene>
    <name type="primary">psmD6</name>
    <name type="ORF">DDB_G0270188</name>
</gene>
<comment type="function">
    <text evidence="1">Acts as a regulatory subunit of the 26S proteasome which is involved in the ATP-dependent degradation of ubiquitinated proteins.</text>
</comment>
<comment type="similarity">
    <text evidence="3">Belongs to the proteasome subunit S10 family.</text>
</comment>